<gene>
    <name type="ordered locus">Ba71V-120</name>
    <name type="ORF">H240R</name>
</gene>
<evidence type="ECO:0000269" key="1">
    <source>
    </source>
</evidence>
<evidence type="ECO:0000269" key="2">
    <source>
    </source>
</evidence>
<evidence type="ECO:0000269" key="3">
    <source>
    </source>
</evidence>
<evidence type="ECO:0000303" key="4">
    <source>
    </source>
</evidence>
<evidence type="ECO:0000305" key="5"/>
<accession>Q65190</accession>
<keyword id="KW-0426">Late protein</keyword>
<keyword id="KW-1185">Reference proteome</keyword>
<keyword id="KW-0946">Virion</keyword>
<reference key="1">
    <citation type="journal article" date="1995" name="Virology">
        <title>Analysis of the complete nucleotide sequence of African swine fever virus.</title>
        <authorList>
            <person name="Yanez R.J."/>
            <person name="Rodriguez J.M."/>
            <person name="Nogal M.L."/>
            <person name="Yuste L."/>
            <person name="Enriquez C."/>
            <person name="Rodriguez J.F."/>
            <person name="Vinuela E."/>
        </authorList>
    </citation>
    <scope>NUCLEOTIDE SEQUENCE [LARGE SCALE GENOMIC DNA]</scope>
</reference>
<reference key="2">
    <citation type="journal article" date="2018" name="J. Virol.">
        <title>A Proteomic Atlas of the African Swine Fever Virus Particle.</title>
        <authorList>
            <person name="Alejo A."/>
            <person name="Matamoros T."/>
            <person name="Guerra M."/>
            <person name="Andres G."/>
        </authorList>
    </citation>
    <scope>SUBCELLULAR LOCATION</scope>
</reference>
<reference key="3">
    <citation type="journal article" date="2020" name="J. Virol.">
        <title>The African Swine Fever Virus Transcriptome.</title>
        <authorList>
            <person name="Cackett G."/>
            <person name="Matelska D."/>
            <person name="Sykora M."/>
            <person name="Portugal R."/>
            <person name="Malecki M."/>
            <person name="Baehler J."/>
            <person name="Dixon L."/>
            <person name="Werner F."/>
        </authorList>
    </citation>
    <scope>INDUCTION</scope>
</reference>
<reference key="4">
    <citation type="journal article" date="2019" name="Science">
        <title>Architecture of African swine fever virus and implications for viral assembly.</title>
        <authorList>
            <person name="Wang N."/>
            <person name="Zhao D."/>
            <person name="Wang J."/>
            <person name="Zhang Y."/>
            <person name="Wang M."/>
            <person name="Gao Y."/>
            <person name="Li F."/>
            <person name="Wang J."/>
            <person name="Bu Z."/>
            <person name="Rao Z."/>
            <person name="Wang X."/>
        </authorList>
    </citation>
    <scope>STRUCTURE BY ELECTRON MICROSCOPY (4.8 ANGSTROMS) OF THE ASFV CAPSID</scope>
    <scope>FUNCTION</scope>
    <scope>SUBCELLULAR LOCATION</scope>
    <scope>IDENTIFICATION</scope>
</reference>
<organism>
    <name type="scientific">African swine fever virus (strain Badajoz 1971 Vero-adapted)</name>
    <name type="common">Ba71V</name>
    <name type="synonym">ASFV</name>
    <dbReference type="NCBI Taxonomy" id="10498"/>
    <lineage>
        <taxon>Viruses</taxon>
        <taxon>Varidnaviria</taxon>
        <taxon>Bamfordvirae</taxon>
        <taxon>Nucleocytoviricota</taxon>
        <taxon>Pokkesviricetes</taxon>
        <taxon>Asfuvirales</taxon>
        <taxon>Asfarviridae</taxon>
        <taxon>Asfivirus</taxon>
        <taxon>African swine fever virus</taxon>
    </lineage>
</organism>
<feature type="chain" id="PRO_0000373599" description="Penton protein H240R">
    <location>
        <begin position="1"/>
        <end position="240"/>
    </location>
</feature>
<name>CAPSP_ASFB7</name>
<dbReference type="EMBL" id="U18466">
    <property type="protein sequence ID" value="AAA65348.1"/>
    <property type="molecule type" value="Genomic_DNA"/>
</dbReference>
<dbReference type="RefSeq" id="NP_042812.1">
    <property type="nucleotide sequence ID" value="NC_001659.2"/>
</dbReference>
<dbReference type="GeneID" id="22220349"/>
<dbReference type="KEGG" id="vg:22220349"/>
<dbReference type="Proteomes" id="UP000000624">
    <property type="component" value="Segment"/>
</dbReference>
<dbReference type="GO" id="GO:0044423">
    <property type="term" value="C:virion component"/>
    <property type="evidence" value="ECO:0007669"/>
    <property type="project" value="UniProtKB-KW"/>
</dbReference>
<protein>
    <recommendedName>
        <fullName evidence="4">Penton protein H240R</fullName>
        <shortName>pH240R</shortName>
    </recommendedName>
</protein>
<comment type="function">
    <text evidence="2">Forms the penton at the fivefold vertices of the icosahedral capsid (PubMed:31624094). Together with the minor capsid proteins (p17, p49, and M1249L), forms a complicated network immediately below the outer capsid shell, stabilizing the whole capsid (PubMed:31624094).</text>
</comment>
<comment type="subcellular location">
    <subcellularLocation>
        <location evidence="1 2">Virion</location>
    </subcellularLocation>
</comment>
<comment type="induction">
    <text evidence="3">Expressed in the late phase of the viral replicative cycle.</text>
</comment>
<comment type="similarity">
    <text evidence="5">Belongs to the asfivirus H240R family.</text>
</comment>
<organismHost>
    <name type="scientific">Ornithodoros</name>
    <name type="common">relapsing fever ticks</name>
    <dbReference type="NCBI Taxonomy" id="6937"/>
</organismHost>
<organismHost>
    <name type="scientific">Sus scrofa</name>
    <name type="common">Pig</name>
    <dbReference type="NCBI Taxonomy" id="9823"/>
</organismHost>
<proteinExistence type="evidence at protein level"/>
<sequence length="240" mass="27617">MAVNIIATRAAPKMASKKEHQYCLLDSQEKRHGHYPFSFELKPYGQTGANIIGVQGSLTHVIKMTVFPFMIPFPLQKTHIDDFIGGRIYLFFKELDMQAVSDVNGMQYHFEFKVVPVSPNQVELLPVNNKYKFTYAIPVVQYLTPIFYDLSGPLDFPLDTLSVHVDSLSNHIQLPIQNHNLTTGDRVFISGYKHLQTIELCKNNKIFIKYIPPLSSEKIKLYIPKNRIRIPLYFKSLKNV</sequence>